<evidence type="ECO:0000255" key="1">
    <source>
        <dbReference type="HAMAP-Rule" id="MF_00412"/>
    </source>
</evidence>
<accession>C1CRW1</accession>
<reference key="1">
    <citation type="journal article" date="2010" name="Genome Biol.">
        <title>Structure and dynamics of the pan-genome of Streptococcus pneumoniae and closely related species.</title>
        <authorList>
            <person name="Donati C."/>
            <person name="Hiller N.L."/>
            <person name="Tettelin H."/>
            <person name="Muzzi A."/>
            <person name="Croucher N.J."/>
            <person name="Angiuoli S.V."/>
            <person name="Oggioni M."/>
            <person name="Dunning Hotopp J.C."/>
            <person name="Hu F.Z."/>
            <person name="Riley D.R."/>
            <person name="Covacci A."/>
            <person name="Mitchell T.J."/>
            <person name="Bentley S.D."/>
            <person name="Kilian M."/>
            <person name="Ehrlich G.D."/>
            <person name="Rappuoli R."/>
            <person name="Moxon E.R."/>
            <person name="Masignani V."/>
        </authorList>
    </citation>
    <scope>NUCLEOTIDE SEQUENCE [LARGE SCALE GENOMIC DNA]</scope>
    <source>
        <strain>Taiwan19F-14</strain>
    </source>
</reference>
<gene>
    <name evidence="1" type="primary">proA</name>
    <name type="ordered locus">SPT_1267</name>
</gene>
<feature type="chain" id="PRO_1000193662" description="Gamma-glutamyl phosphate reductase">
    <location>
        <begin position="1"/>
        <end position="420"/>
    </location>
</feature>
<keyword id="KW-0028">Amino-acid biosynthesis</keyword>
<keyword id="KW-0963">Cytoplasm</keyword>
<keyword id="KW-0521">NADP</keyword>
<keyword id="KW-0560">Oxidoreductase</keyword>
<keyword id="KW-0641">Proline biosynthesis</keyword>
<dbReference type="EC" id="1.2.1.41" evidence="1"/>
<dbReference type="EMBL" id="CP000921">
    <property type="protein sequence ID" value="ACO22815.1"/>
    <property type="molecule type" value="Genomic_DNA"/>
</dbReference>
<dbReference type="RefSeq" id="WP_000254686.1">
    <property type="nucleotide sequence ID" value="NC_012469.1"/>
</dbReference>
<dbReference type="SMR" id="C1CRW1"/>
<dbReference type="KEGG" id="snt:SPT_1267"/>
<dbReference type="HOGENOM" id="CLU_030231_0_0_9"/>
<dbReference type="UniPathway" id="UPA00098">
    <property type="reaction ID" value="UER00360"/>
</dbReference>
<dbReference type="GO" id="GO:0005737">
    <property type="term" value="C:cytoplasm"/>
    <property type="evidence" value="ECO:0007669"/>
    <property type="project" value="UniProtKB-SubCell"/>
</dbReference>
<dbReference type="GO" id="GO:0004350">
    <property type="term" value="F:glutamate-5-semialdehyde dehydrogenase activity"/>
    <property type="evidence" value="ECO:0007669"/>
    <property type="project" value="UniProtKB-UniRule"/>
</dbReference>
<dbReference type="GO" id="GO:0050661">
    <property type="term" value="F:NADP binding"/>
    <property type="evidence" value="ECO:0007669"/>
    <property type="project" value="InterPro"/>
</dbReference>
<dbReference type="GO" id="GO:0055129">
    <property type="term" value="P:L-proline biosynthetic process"/>
    <property type="evidence" value="ECO:0007669"/>
    <property type="project" value="UniProtKB-UniRule"/>
</dbReference>
<dbReference type="CDD" id="cd07079">
    <property type="entry name" value="ALDH_F18-19_ProA-GPR"/>
    <property type="match status" value="1"/>
</dbReference>
<dbReference type="FunFam" id="3.40.309.10:FF:000006">
    <property type="entry name" value="Gamma-glutamyl phosphate reductase"/>
    <property type="match status" value="1"/>
</dbReference>
<dbReference type="Gene3D" id="3.40.605.10">
    <property type="entry name" value="Aldehyde Dehydrogenase, Chain A, domain 1"/>
    <property type="match status" value="1"/>
</dbReference>
<dbReference type="Gene3D" id="3.40.309.10">
    <property type="entry name" value="Aldehyde Dehydrogenase, Chain A, domain 2"/>
    <property type="match status" value="1"/>
</dbReference>
<dbReference type="HAMAP" id="MF_00412">
    <property type="entry name" value="ProA"/>
    <property type="match status" value="1"/>
</dbReference>
<dbReference type="InterPro" id="IPR016161">
    <property type="entry name" value="Ald_DH/histidinol_DH"/>
</dbReference>
<dbReference type="InterPro" id="IPR016163">
    <property type="entry name" value="Ald_DH_C"/>
</dbReference>
<dbReference type="InterPro" id="IPR016162">
    <property type="entry name" value="Ald_DH_N"/>
</dbReference>
<dbReference type="InterPro" id="IPR015590">
    <property type="entry name" value="Aldehyde_DH_dom"/>
</dbReference>
<dbReference type="InterPro" id="IPR020593">
    <property type="entry name" value="G-glutamylP_reductase_CS"/>
</dbReference>
<dbReference type="InterPro" id="IPR012134">
    <property type="entry name" value="Glu-5-SA_DH"/>
</dbReference>
<dbReference type="InterPro" id="IPR000965">
    <property type="entry name" value="GPR_dom"/>
</dbReference>
<dbReference type="NCBIfam" id="NF001221">
    <property type="entry name" value="PRK00197.1"/>
    <property type="match status" value="1"/>
</dbReference>
<dbReference type="NCBIfam" id="TIGR00407">
    <property type="entry name" value="proA"/>
    <property type="match status" value="1"/>
</dbReference>
<dbReference type="PANTHER" id="PTHR11063:SF8">
    <property type="entry name" value="DELTA-1-PYRROLINE-5-CARBOXYLATE SYNTHASE"/>
    <property type="match status" value="1"/>
</dbReference>
<dbReference type="PANTHER" id="PTHR11063">
    <property type="entry name" value="GLUTAMATE SEMIALDEHYDE DEHYDROGENASE"/>
    <property type="match status" value="1"/>
</dbReference>
<dbReference type="Pfam" id="PF00171">
    <property type="entry name" value="Aldedh"/>
    <property type="match status" value="1"/>
</dbReference>
<dbReference type="PIRSF" id="PIRSF000151">
    <property type="entry name" value="GPR"/>
    <property type="match status" value="1"/>
</dbReference>
<dbReference type="SUPFAM" id="SSF53720">
    <property type="entry name" value="ALDH-like"/>
    <property type="match status" value="1"/>
</dbReference>
<dbReference type="PROSITE" id="PS01223">
    <property type="entry name" value="PROA"/>
    <property type="match status" value="1"/>
</dbReference>
<proteinExistence type="inferred from homology"/>
<organism>
    <name type="scientific">Streptococcus pneumoniae (strain Taiwan19F-14)</name>
    <dbReference type="NCBI Taxonomy" id="487213"/>
    <lineage>
        <taxon>Bacteria</taxon>
        <taxon>Bacillati</taxon>
        <taxon>Bacillota</taxon>
        <taxon>Bacilli</taxon>
        <taxon>Lactobacillales</taxon>
        <taxon>Streptococcaceae</taxon>
        <taxon>Streptococcus</taxon>
    </lineage>
</organism>
<comment type="function">
    <text evidence="1">Catalyzes the NADPH-dependent reduction of L-glutamate 5-phosphate into L-glutamate 5-semialdehyde and phosphate. The product spontaneously undergoes cyclization to form 1-pyrroline-5-carboxylate.</text>
</comment>
<comment type="catalytic activity">
    <reaction evidence="1">
        <text>L-glutamate 5-semialdehyde + phosphate + NADP(+) = L-glutamyl 5-phosphate + NADPH + H(+)</text>
        <dbReference type="Rhea" id="RHEA:19541"/>
        <dbReference type="ChEBI" id="CHEBI:15378"/>
        <dbReference type="ChEBI" id="CHEBI:43474"/>
        <dbReference type="ChEBI" id="CHEBI:57783"/>
        <dbReference type="ChEBI" id="CHEBI:58066"/>
        <dbReference type="ChEBI" id="CHEBI:58274"/>
        <dbReference type="ChEBI" id="CHEBI:58349"/>
        <dbReference type="EC" id="1.2.1.41"/>
    </reaction>
</comment>
<comment type="pathway">
    <text evidence="1">Amino-acid biosynthesis; L-proline biosynthesis; L-glutamate 5-semialdehyde from L-glutamate: step 2/2.</text>
</comment>
<comment type="subcellular location">
    <subcellularLocation>
        <location evidence="1">Cytoplasm</location>
    </subcellularLocation>
</comment>
<comment type="similarity">
    <text evidence="1">Belongs to the gamma-glutamyl phosphate reductase family.</text>
</comment>
<sequence length="420" mass="45225">MVSRQEQFEQVQAVKKSINTASEEVKNQALLAMADHLVAATEEILAANALDMAAAKGKISDVMLDRLYLDADRIEAMARGIREVVALPDPIGEVLETSQLENGLVITKKRVAMGVIGIIYESRPNVTSDAAALTLKSGNAVVLRSGKDAYQTTHAIVTALKKGLETTTIHPNVIQLVEDTSRESSYAMMKAKGYLDLLIPRGGAGLINAVVENAIVPVIETGTGIVHVYVDKDADEDKALSIINNAKTSRPSVCNAMEVLLVHENKAASILPRLDQMLVAERKEAGLEPIQFRLDSKASQFVSGQAAETQDFDTEFLDYVLAVKVVSSLEEAVAHIESHSTHHSDAIVTENAEAAAYFTDQVDSAAVYVNASTRFTDGGQFGLGCEMGISTQKLHARGPMGLKELTSYKYVVAGDGQIRE</sequence>
<name>PROA_STRZT</name>
<protein>
    <recommendedName>
        <fullName evidence="1">Gamma-glutamyl phosphate reductase</fullName>
        <shortName evidence="1">GPR</shortName>
        <ecNumber evidence="1">1.2.1.41</ecNumber>
    </recommendedName>
    <alternativeName>
        <fullName evidence="1">Glutamate-5-semialdehyde dehydrogenase</fullName>
    </alternativeName>
    <alternativeName>
        <fullName evidence="1">Glutamyl-gamma-semialdehyde dehydrogenase</fullName>
        <shortName evidence="1">GSA dehydrogenase</shortName>
    </alternativeName>
</protein>